<accession>P07031</accession>
<gene>
    <name type="primary">ACYP2</name>
</gene>
<protein>
    <recommendedName>
        <fullName>Acylphosphatase-2</fullName>
        <ecNumber>3.6.1.7</ecNumber>
    </recommendedName>
    <alternativeName>
        <fullName>Acylphosphatase isozyme CH1</fullName>
    </alternativeName>
    <alternativeName>
        <fullName>Acylphosphatase, muscle type isozyme</fullName>
    </alternativeName>
    <alternativeName>
        <fullName>Acylphosphate phosphohydrolase 2</fullName>
    </alternativeName>
</protein>
<feature type="initiator methionine" description="Removed" evidence="1">
    <location>
        <position position="1"/>
    </location>
</feature>
<feature type="chain" id="PRO_0000158548" description="Acylphosphatase-2">
    <location>
        <begin position="2"/>
        <end position="103"/>
    </location>
</feature>
<feature type="domain" description="Acylphosphatase-like" evidence="2">
    <location>
        <begin position="13"/>
        <end position="103"/>
    </location>
</feature>
<feature type="active site" evidence="2">
    <location>
        <position position="28"/>
    </location>
</feature>
<feature type="active site" evidence="2">
    <location>
        <position position="46"/>
    </location>
</feature>
<feature type="modified residue" description="N-acetylserine" evidence="3">
    <location>
        <position position="2"/>
    </location>
</feature>
<evidence type="ECO:0000250" key="1"/>
<evidence type="ECO:0000255" key="2">
    <source>
        <dbReference type="PROSITE-ProRule" id="PRU00520"/>
    </source>
</evidence>
<evidence type="ECO:0000269" key="3">
    <source>
    </source>
</evidence>
<evidence type="ECO:0000305" key="4"/>
<sequence>MSALTKASGSLKSVDYEVFGRVQGVCFRMYTEEEARKLGVVGWVKNTSQGTVTGQVQGPEDKVNAMKSWLSKVGSPSSRIDRTKFSNEKEISKLDFSGFSTRY</sequence>
<name>ACYP2_CHICK</name>
<dbReference type="EC" id="3.6.1.7"/>
<dbReference type="PIR" id="A41512">
    <property type="entry name" value="QPCH"/>
</dbReference>
<dbReference type="RefSeq" id="NP_001161234.1">
    <property type="nucleotide sequence ID" value="NM_001167762.1"/>
</dbReference>
<dbReference type="SMR" id="P07031"/>
<dbReference type="FunCoup" id="P07031">
    <property type="interactions" value="969"/>
</dbReference>
<dbReference type="STRING" id="9031.ENSGALP00000041720"/>
<dbReference type="iPTMnet" id="P07031"/>
<dbReference type="PaxDb" id="9031-ENSGALP00000041720"/>
<dbReference type="GeneID" id="421217"/>
<dbReference type="KEGG" id="gga:421217"/>
<dbReference type="CTD" id="98"/>
<dbReference type="VEuPathDB" id="HostDB:geneid_421217"/>
<dbReference type="eggNOG" id="KOG3360">
    <property type="taxonomic scope" value="Eukaryota"/>
</dbReference>
<dbReference type="HOGENOM" id="CLU_141932_0_1_1"/>
<dbReference type="InParanoid" id="P07031"/>
<dbReference type="OMA" id="HAIMAEN"/>
<dbReference type="OrthoDB" id="7961613at2759"/>
<dbReference type="PhylomeDB" id="P07031"/>
<dbReference type="SABIO-RK" id="P07031"/>
<dbReference type="PRO" id="PR:P07031"/>
<dbReference type="Proteomes" id="UP000000539">
    <property type="component" value="Chromosome 3"/>
</dbReference>
<dbReference type="Bgee" id="ENSGALG00000027632">
    <property type="expression patterns" value="Expressed in muscle tissue and 14 other cell types or tissues"/>
</dbReference>
<dbReference type="GO" id="GO:0003998">
    <property type="term" value="F:acylphosphatase activity"/>
    <property type="evidence" value="ECO:0000318"/>
    <property type="project" value="GO_Central"/>
</dbReference>
<dbReference type="FunFam" id="3.30.70.100:FF:000011">
    <property type="entry name" value="Acylphosphatase"/>
    <property type="match status" value="1"/>
</dbReference>
<dbReference type="Gene3D" id="3.30.70.100">
    <property type="match status" value="1"/>
</dbReference>
<dbReference type="InterPro" id="IPR020456">
    <property type="entry name" value="Acylphosphatase"/>
</dbReference>
<dbReference type="InterPro" id="IPR001792">
    <property type="entry name" value="Acylphosphatase-like_dom"/>
</dbReference>
<dbReference type="InterPro" id="IPR036046">
    <property type="entry name" value="Acylphosphatase-like_dom_sf"/>
</dbReference>
<dbReference type="InterPro" id="IPR017968">
    <property type="entry name" value="Acylphosphatase_CS"/>
</dbReference>
<dbReference type="PANTHER" id="PTHR10029">
    <property type="entry name" value="ACYLPHOSPHATASE"/>
    <property type="match status" value="1"/>
</dbReference>
<dbReference type="PANTHER" id="PTHR10029:SF20">
    <property type="entry name" value="ACYLPHOSPHATASE-2"/>
    <property type="match status" value="1"/>
</dbReference>
<dbReference type="Pfam" id="PF00708">
    <property type="entry name" value="Acylphosphatase"/>
    <property type="match status" value="1"/>
</dbReference>
<dbReference type="PRINTS" id="PR00112">
    <property type="entry name" value="ACYLPHPHTASE"/>
</dbReference>
<dbReference type="SUPFAM" id="SSF54975">
    <property type="entry name" value="Acylphosphatase/BLUF domain-like"/>
    <property type="match status" value="1"/>
</dbReference>
<dbReference type="PROSITE" id="PS00150">
    <property type="entry name" value="ACYLPHOSPHATASE_1"/>
    <property type="match status" value="1"/>
</dbReference>
<dbReference type="PROSITE" id="PS00151">
    <property type="entry name" value="ACYLPHOSPHATASE_2"/>
    <property type="match status" value="1"/>
</dbReference>
<dbReference type="PROSITE" id="PS51160">
    <property type="entry name" value="ACYLPHOSPHATASE_3"/>
    <property type="match status" value="1"/>
</dbReference>
<organism>
    <name type="scientific">Gallus gallus</name>
    <name type="common">Chicken</name>
    <dbReference type="NCBI Taxonomy" id="9031"/>
    <lineage>
        <taxon>Eukaryota</taxon>
        <taxon>Metazoa</taxon>
        <taxon>Chordata</taxon>
        <taxon>Craniata</taxon>
        <taxon>Vertebrata</taxon>
        <taxon>Euteleostomi</taxon>
        <taxon>Archelosauria</taxon>
        <taxon>Archosauria</taxon>
        <taxon>Dinosauria</taxon>
        <taxon>Saurischia</taxon>
        <taxon>Theropoda</taxon>
        <taxon>Coelurosauria</taxon>
        <taxon>Aves</taxon>
        <taxon>Neognathae</taxon>
        <taxon>Galloanserae</taxon>
        <taxon>Galliformes</taxon>
        <taxon>Phasianidae</taxon>
        <taxon>Phasianinae</taxon>
        <taxon>Gallus</taxon>
    </lineage>
</organism>
<reference key="1">
    <citation type="journal article" date="1987" name="J. Biochem.">
        <title>The primary structure of chicken muscle acylphosphatase isozyme Ch1.</title>
        <authorList>
            <person name="Minowa O."/>
            <person name="Ohba Y."/>
            <person name="Mizuno Y."/>
            <person name="Shiokawa H."/>
        </authorList>
    </citation>
    <scope>PROTEIN SEQUENCE OF 2-103</scope>
    <scope>ACETYLATION AT SER-2</scope>
    <source>
        <tissue>Muscle</tissue>
    </source>
</reference>
<proteinExistence type="evidence at protein level"/>
<comment type="function">
    <text>Its physiological role is not yet clear.</text>
</comment>
<comment type="catalytic activity">
    <reaction>
        <text>an acyl phosphate + H2O = a carboxylate + phosphate + H(+)</text>
        <dbReference type="Rhea" id="RHEA:14965"/>
        <dbReference type="ChEBI" id="CHEBI:15377"/>
        <dbReference type="ChEBI" id="CHEBI:15378"/>
        <dbReference type="ChEBI" id="CHEBI:29067"/>
        <dbReference type="ChEBI" id="CHEBI:43474"/>
        <dbReference type="ChEBI" id="CHEBI:59918"/>
        <dbReference type="EC" id="3.6.1.7"/>
    </reaction>
</comment>
<comment type="similarity">
    <text evidence="4">Belongs to the acylphosphatase family.</text>
</comment>
<keyword id="KW-0007">Acetylation</keyword>
<keyword id="KW-0903">Direct protein sequencing</keyword>
<keyword id="KW-0378">Hydrolase</keyword>
<keyword id="KW-1185">Reference proteome</keyword>